<organism>
    <name type="scientific">Serratia proteamaculans (strain 568)</name>
    <dbReference type="NCBI Taxonomy" id="399741"/>
    <lineage>
        <taxon>Bacteria</taxon>
        <taxon>Pseudomonadati</taxon>
        <taxon>Pseudomonadota</taxon>
        <taxon>Gammaproteobacteria</taxon>
        <taxon>Enterobacterales</taxon>
        <taxon>Yersiniaceae</taxon>
        <taxon>Serratia</taxon>
    </lineage>
</organism>
<feature type="chain" id="PRO_1000067704" description="Small ribosomal subunit protein uS17">
    <location>
        <begin position="1"/>
        <end position="84"/>
    </location>
</feature>
<comment type="function">
    <text evidence="1">One of the primary rRNA binding proteins, it binds specifically to the 5'-end of 16S ribosomal RNA.</text>
</comment>
<comment type="subunit">
    <text evidence="1">Part of the 30S ribosomal subunit.</text>
</comment>
<comment type="similarity">
    <text evidence="1">Belongs to the universal ribosomal protein uS17 family.</text>
</comment>
<protein>
    <recommendedName>
        <fullName evidence="1">Small ribosomal subunit protein uS17</fullName>
    </recommendedName>
    <alternativeName>
        <fullName evidence="2">30S ribosomal protein S17</fullName>
    </alternativeName>
</protein>
<sequence>MTDINRTLQGRVISDKMEKSMVVAIERTVKHPIYGKFIKRTTKLHVHDENNECGIGDVVEIRECRPLSKTKSWTLVRVVEKAIL</sequence>
<reference key="1">
    <citation type="submission" date="2007-09" db="EMBL/GenBank/DDBJ databases">
        <title>Complete sequence of chromosome of Serratia proteamaculans 568.</title>
        <authorList>
            <consortium name="US DOE Joint Genome Institute"/>
            <person name="Copeland A."/>
            <person name="Lucas S."/>
            <person name="Lapidus A."/>
            <person name="Barry K."/>
            <person name="Glavina del Rio T."/>
            <person name="Dalin E."/>
            <person name="Tice H."/>
            <person name="Pitluck S."/>
            <person name="Chain P."/>
            <person name="Malfatti S."/>
            <person name="Shin M."/>
            <person name="Vergez L."/>
            <person name="Schmutz J."/>
            <person name="Larimer F."/>
            <person name="Land M."/>
            <person name="Hauser L."/>
            <person name="Kyrpides N."/>
            <person name="Kim E."/>
            <person name="Taghavi S."/>
            <person name="Newman L."/>
            <person name="Vangronsveld J."/>
            <person name="van der Lelie D."/>
            <person name="Richardson P."/>
        </authorList>
    </citation>
    <scope>NUCLEOTIDE SEQUENCE [LARGE SCALE GENOMIC DNA]</scope>
    <source>
        <strain>568</strain>
    </source>
</reference>
<name>RS17_SERP5</name>
<gene>
    <name evidence="1" type="primary">rpsQ</name>
    <name type="ordered locus">Spro_4535</name>
</gene>
<keyword id="KW-0687">Ribonucleoprotein</keyword>
<keyword id="KW-0689">Ribosomal protein</keyword>
<keyword id="KW-0694">RNA-binding</keyword>
<keyword id="KW-0699">rRNA-binding</keyword>
<evidence type="ECO:0000255" key="1">
    <source>
        <dbReference type="HAMAP-Rule" id="MF_01345"/>
    </source>
</evidence>
<evidence type="ECO:0000305" key="2"/>
<accession>A8GKI8</accession>
<dbReference type="EMBL" id="CP000826">
    <property type="protein sequence ID" value="ABV43628.1"/>
    <property type="molecule type" value="Genomic_DNA"/>
</dbReference>
<dbReference type="SMR" id="A8GKI8"/>
<dbReference type="STRING" id="399741.Spro_4535"/>
<dbReference type="KEGG" id="spe:Spro_4535"/>
<dbReference type="eggNOG" id="COG0186">
    <property type="taxonomic scope" value="Bacteria"/>
</dbReference>
<dbReference type="HOGENOM" id="CLU_073626_1_1_6"/>
<dbReference type="OrthoDB" id="9811714at2"/>
<dbReference type="GO" id="GO:0022627">
    <property type="term" value="C:cytosolic small ribosomal subunit"/>
    <property type="evidence" value="ECO:0007669"/>
    <property type="project" value="TreeGrafter"/>
</dbReference>
<dbReference type="GO" id="GO:0019843">
    <property type="term" value="F:rRNA binding"/>
    <property type="evidence" value="ECO:0007669"/>
    <property type="project" value="UniProtKB-UniRule"/>
</dbReference>
<dbReference type="GO" id="GO:0003735">
    <property type="term" value="F:structural constituent of ribosome"/>
    <property type="evidence" value="ECO:0007669"/>
    <property type="project" value="InterPro"/>
</dbReference>
<dbReference type="GO" id="GO:0006412">
    <property type="term" value="P:translation"/>
    <property type="evidence" value="ECO:0007669"/>
    <property type="project" value="UniProtKB-UniRule"/>
</dbReference>
<dbReference type="CDD" id="cd00364">
    <property type="entry name" value="Ribosomal_uS17"/>
    <property type="match status" value="1"/>
</dbReference>
<dbReference type="FunFam" id="2.40.50.140:FF:000014">
    <property type="entry name" value="30S ribosomal protein S17"/>
    <property type="match status" value="1"/>
</dbReference>
<dbReference type="Gene3D" id="2.40.50.140">
    <property type="entry name" value="Nucleic acid-binding proteins"/>
    <property type="match status" value="1"/>
</dbReference>
<dbReference type="HAMAP" id="MF_01345_B">
    <property type="entry name" value="Ribosomal_uS17_B"/>
    <property type="match status" value="1"/>
</dbReference>
<dbReference type="InterPro" id="IPR012340">
    <property type="entry name" value="NA-bd_OB-fold"/>
</dbReference>
<dbReference type="InterPro" id="IPR000266">
    <property type="entry name" value="Ribosomal_uS17"/>
</dbReference>
<dbReference type="InterPro" id="IPR019984">
    <property type="entry name" value="Ribosomal_uS17_bact/chlr"/>
</dbReference>
<dbReference type="InterPro" id="IPR019979">
    <property type="entry name" value="Ribosomal_uS17_CS"/>
</dbReference>
<dbReference type="NCBIfam" id="NF004123">
    <property type="entry name" value="PRK05610.1"/>
    <property type="match status" value="1"/>
</dbReference>
<dbReference type="NCBIfam" id="TIGR03635">
    <property type="entry name" value="uS17_bact"/>
    <property type="match status" value="1"/>
</dbReference>
<dbReference type="PANTHER" id="PTHR10744">
    <property type="entry name" value="40S RIBOSOMAL PROTEIN S11 FAMILY MEMBER"/>
    <property type="match status" value="1"/>
</dbReference>
<dbReference type="PANTHER" id="PTHR10744:SF1">
    <property type="entry name" value="SMALL RIBOSOMAL SUBUNIT PROTEIN US17M"/>
    <property type="match status" value="1"/>
</dbReference>
<dbReference type="Pfam" id="PF00366">
    <property type="entry name" value="Ribosomal_S17"/>
    <property type="match status" value="1"/>
</dbReference>
<dbReference type="PRINTS" id="PR00973">
    <property type="entry name" value="RIBOSOMALS17"/>
</dbReference>
<dbReference type="SUPFAM" id="SSF50249">
    <property type="entry name" value="Nucleic acid-binding proteins"/>
    <property type="match status" value="1"/>
</dbReference>
<dbReference type="PROSITE" id="PS00056">
    <property type="entry name" value="RIBOSOMAL_S17"/>
    <property type="match status" value="1"/>
</dbReference>
<proteinExistence type="inferred from homology"/>